<evidence type="ECO:0000255" key="1">
    <source>
        <dbReference type="PROSITE-ProRule" id="PRU00031"/>
    </source>
</evidence>
<evidence type="ECO:0000269" key="2">
    <source>
    </source>
</evidence>
<evidence type="ECO:0000269" key="3">
    <source>
    </source>
</evidence>
<evidence type="ECO:0000269" key="4">
    <source>
    </source>
</evidence>
<evidence type="ECO:0000303" key="5">
    <source>
    </source>
</evidence>
<evidence type="ECO:0000303" key="6">
    <source>
    </source>
</evidence>
<evidence type="ECO:0000305" key="7"/>
<evidence type="ECO:0000305" key="8">
    <source>
    </source>
</evidence>
<evidence type="ECO:0000305" key="9">
    <source>
    </source>
</evidence>
<evidence type="ECO:0007829" key="10">
    <source>
        <dbReference type="PDB" id="5M4V"/>
    </source>
</evidence>
<feature type="chain" id="PRO_0000442231" description="Mambaquaretin-1" evidence="2">
    <location>
        <begin position="1"/>
        <end position="57"/>
    </location>
</feature>
<feature type="domain" description="BPTI/Kunitz inhibitor" evidence="1">
    <location>
        <begin position="5"/>
        <end position="55"/>
    </location>
</feature>
<feature type="region of interest" description="Important for binding V2R" evidence="2">
    <location>
        <begin position="15"/>
        <end position="16"/>
    </location>
</feature>
<feature type="disulfide bond" evidence="1 8">
    <location>
        <begin position="5"/>
        <end position="55"/>
    </location>
</feature>
<feature type="disulfide bond" evidence="1 8">
    <location>
        <begin position="14"/>
        <end position="38"/>
    </location>
</feature>
<feature type="disulfide bond" evidence="1 8">
    <location>
        <begin position="30"/>
        <end position="51"/>
    </location>
</feature>
<feature type="mutagenesis site" description="No change in affinity for V2R, loss of activity on Kv1.1/KCNA1." evidence="2">
    <location>
        <begin position="1"/>
        <end position="4"/>
    </location>
</feature>
<feature type="mutagenesis site" description="Important (26-fold) increase in activity on Kv1.1/KCNA1, no change in affinity for V2R." evidence="2">
    <original>S</original>
    <variation>K</variation>
    <location>
        <position position="3"/>
    </location>
</feature>
<feature type="mutagenesis site" description="21-fold decrease in affinity for human V2R." evidence="4">
    <original>V</original>
    <variation>S</variation>
    <location>
        <position position="9"/>
    </location>
</feature>
<feature type="mutagenesis site" description="106-fold decrease in affinity for human V2R." evidence="4">
    <original>K</original>
    <variation>E</variation>
    <location>
        <position position="10"/>
    </location>
</feature>
<feature type="mutagenesis site" description="Important increase in trypsin inhibition, 1000-fold decrease in affinity for V2R." evidence="2">
    <original>NG</original>
    <variation>KA</variation>
    <location>
        <begin position="15"/>
        <end position="16"/>
    </location>
</feature>
<feature type="mutagenesis site" description="730-fold decrease in affinity for human V2R." evidence="4">
    <original>F</original>
    <variation>A</variation>
    <location>
        <position position="17"/>
    </location>
</feature>
<feature type="mutagenesis site" description="53-fold decrease in affinity for human V2R." evidence="4">
    <original>F</original>
    <variation>A</variation>
    <location>
        <position position="18"/>
    </location>
</feature>
<feature type="mutagenesis site" description="24-fold decrease in affinity for human V2R." evidence="4">
    <original>T</original>
    <variation>F</variation>
    <location>
        <position position="34"/>
    </location>
</feature>
<feature type="mutagenesis site" description="8-fold increase in affinity for human V2R, but not for rat V2R. No change in diuresis in rat. The analog is 14-fold more specific for human V2R than for rat V2R." evidence="4">
    <original>K</original>
    <variation>A</variation>
    <location>
        <position position="39"/>
    </location>
</feature>
<feature type="mutagenesis site" description="14-fold decrease in affinity for human V2R." evidence="4">
    <original>R</original>
    <variation>E</variation>
    <location>
        <position position="44"/>
    </location>
</feature>
<feature type="helix" evidence="10">
    <location>
        <begin position="3"/>
        <end position="6"/>
    </location>
</feature>
<feature type="strand" evidence="10">
    <location>
        <begin position="18"/>
        <end position="23"/>
    </location>
</feature>
<feature type="turn" evidence="10">
    <location>
        <begin position="25"/>
        <end position="27"/>
    </location>
</feature>
<feature type="strand" evidence="10">
    <location>
        <begin position="28"/>
        <end position="35"/>
    </location>
</feature>
<feature type="strand" evidence="10">
    <location>
        <begin position="37"/>
        <end position="39"/>
    </location>
</feature>
<feature type="strand" evidence="10">
    <location>
        <begin position="45"/>
        <end position="47"/>
    </location>
</feature>
<feature type="helix" evidence="10">
    <location>
        <begin position="48"/>
        <end position="55"/>
    </location>
</feature>
<dbReference type="PDB" id="5M4V">
    <property type="method" value="X-ray"/>
    <property type="resolution" value="1.06 A"/>
    <property type="chains" value="A=1-57"/>
</dbReference>
<dbReference type="PDBsum" id="5M4V"/>
<dbReference type="SMR" id="A0A1Z0YU59"/>
<dbReference type="GO" id="GO:0005615">
    <property type="term" value="C:extracellular space"/>
    <property type="evidence" value="ECO:0007669"/>
    <property type="project" value="TreeGrafter"/>
</dbReference>
<dbReference type="GO" id="GO:0004867">
    <property type="term" value="F:serine-type endopeptidase inhibitor activity"/>
    <property type="evidence" value="ECO:0007669"/>
    <property type="project" value="InterPro"/>
</dbReference>
<dbReference type="GO" id="GO:0090729">
    <property type="term" value="F:toxin activity"/>
    <property type="evidence" value="ECO:0007669"/>
    <property type="project" value="UniProtKB-KW"/>
</dbReference>
<dbReference type="CDD" id="cd22595">
    <property type="entry name" value="Kunitz_dendrotoxin"/>
    <property type="match status" value="1"/>
</dbReference>
<dbReference type="FunFam" id="4.10.410.10:FF:000004">
    <property type="entry name" value="Tissue factor pathway inhibitor"/>
    <property type="match status" value="1"/>
</dbReference>
<dbReference type="Gene3D" id="4.10.410.10">
    <property type="entry name" value="Pancreatic trypsin inhibitor Kunitz domain"/>
    <property type="match status" value="1"/>
</dbReference>
<dbReference type="InterPro" id="IPR002223">
    <property type="entry name" value="Kunitz_BPTI"/>
</dbReference>
<dbReference type="InterPro" id="IPR036880">
    <property type="entry name" value="Kunitz_BPTI_sf"/>
</dbReference>
<dbReference type="InterPro" id="IPR020901">
    <property type="entry name" value="Prtase_inh_Kunz-CS"/>
</dbReference>
<dbReference type="InterPro" id="IPR050098">
    <property type="entry name" value="TFPI/VKTCI-like"/>
</dbReference>
<dbReference type="PANTHER" id="PTHR10083:SF217">
    <property type="entry name" value="BOOPHILIN-H2"/>
    <property type="match status" value="1"/>
</dbReference>
<dbReference type="PANTHER" id="PTHR10083">
    <property type="entry name" value="KUNITZ-TYPE PROTEASE INHIBITOR-RELATED"/>
    <property type="match status" value="1"/>
</dbReference>
<dbReference type="Pfam" id="PF00014">
    <property type="entry name" value="Kunitz_BPTI"/>
    <property type="match status" value="1"/>
</dbReference>
<dbReference type="PRINTS" id="PR00759">
    <property type="entry name" value="BASICPTASE"/>
</dbReference>
<dbReference type="SMART" id="SM00131">
    <property type="entry name" value="KU"/>
    <property type="match status" value="1"/>
</dbReference>
<dbReference type="SUPFAM" id="SSF57362">
    <property type="entry name" value="BPTI-like"/>
    <property type="match status" value="1"/>
</dbReference>
<dbReference type="PROSITE" id="PS00280">
    <property type="entry name" value="BPTI_KUNITZ_1"/>
    <property type="match status" value="1"/>
</dbReference>
<dbReference type="PROSITE" id="PS50279">
    <property type="entry name" value="BPTI_KUNITZ_2"/>
    <property type="match status" value="1"/>
</dbReference>
<sequence>RPSFCNLPVKPGPCNGFFSAFYYSQKTNKCHSFTYGGCKGNANRFSTIEKCRRTCVG</sequence>
<proteinExistence type="evidence at protein level"/>
<reference key="1">
    <citation type="journal article" date="2017" name="Proc. Natl. Acad. Sci. U.S.A.">
        <title>Green mamba peptide targets type-2 vasopressin receptor against polycystic kidney disease.</title>
        <authorList>
            <person name="Ciolek J."/>
            <person name="Reinfrank H."/>
            <person name="Quinton L."/>
            <person name="Viengchareun S."/>
            <person name="Stura E.A."/>
            <person name="Vera L."/>
            <person name="Sigismeau S."/>
            <person name="Mouillac B."/>
            <person name="Orcel H."/>
            <person name="Peigneur S."/>
            <person name="Tytgat J."/>
            <person name="Droctove L."/>
            <person name="Beau F."/>
            <person name="Nevoux J."/>
            <person name="Lombes M."/>
            <person name="Mourier G."/>
            <person name="De Pauw E."/>
            <person name="Servent D."/>
            <person name="Mendre C."/>
            <person name="Witzgall R."/>
            <person name="Gilles N."/>
        </authorList>
    </citation>
    <scope>PROTEIN SEQUENCE</scope>
    <scope>FUNCTION</scope>
    <scope>SUBCELLULAR LOCATION</scope>
    <scope>X-RAY CRYSTALLOGRAPHY (1.06 ANGSTROMS) OF MUTANT NG/KA</scope>
    <scope>MASS SPECTROMETRY</scope>
    <scope>SYNTHESIS</scope>
    <scope>MUTAGENESIS OF SER-3; 1-ARG--PHE-4 AND 15-ASN-GLY-16</scope>
    <source>
        <tissue>Venom</tissue>
    </source>
</reference>
<reference key="2">
    <citation type="journal article" date="2020" name="Theranostics">
        <title>A snake toxin as a theranostic agent for the type 2 vasopressin receptor.</title>
        <authorList>
            <person name="Droctove L."/>
            <person name="Lancien M."/>
            <person name="Tran V.L."/>
            <person name="Susset M."/>
            <person name="Jego B."/>
            <person name="Theodoro F."/>
            <person name="Kessler P."/>
            <person name="Mourier G."/>
            <person name="Robin P."/>
            <person name="Diarra S.S."/>
            <person name="Palea S."/>
            <person name="Flahault A."/>
            <person name="Chorfa A."/>
            <person name="Corbani M."/>
            <person name="Llorens-Cortes C."/>
            <person name="Mouillac B."/>
            <person name="Mendre C."/>
            <person name="Pruvost A."/>
            <person name="Servent D."/>
            <person name="Truillet C."/>
            <person name="Gilles N."/>
        </authorList>
    </citation>
    <scope>FUNCTION</scope>
    <scope>BIOASSAY</scope>
    <scope>BIOTECHNOLOGY</scope>
</reference>
<reference key="3">
    <citation type="journal article" date="2022" name="Br. J. Pharmacol.">
        <title>A new Kunitz-type snake toxin family associated with an original mode of interaction with the vasopressin 2 receptor.</title>
        <authorList>
            <person name="Droctove L."/>
            <person name="Ciolek J."/>
            <person name="Mendre C."/>
            <person name="Chorfa A."/>
            <person name="Huerta P."/>
            <person name="Carvalho C."/>
            <person name="Gouin C."/>
            <person name="Lancien M."/>
            <person name="Stanajic-Petrovic G."/>
            <person name="Braco L."/>
            <person name="Blanchet G."/>
            <person name="Upert G."/>
            <person name="De Pauw G."/>
            <person name="Barbe P."/>
            <person name="Keck M."/>
            <person name="Mourier G."/>
            <person name="Mouillac B."/>
            <person name="Denis S."/>
            <person name="Rodriguez de la Vega R.C."/>
            <person name="Quinton L."/>
            <person name="Gilles N."/>
        </authorList>
    </citation>
    <scope>FUNCTION</scope>
    <scope>BIOASSAY</scope>
    <scope>MASS SPECTROMETRY</scope>
    <scope>MUTAGENESIS OF VAL-9; LYS-10; PHE-17; PHE-18; THR-34; LYS-39 AND ARG-44</scope>
</reference>
<organism>
    <name type="scientific">Dendroaspis angusticeps</name>
    <name type="common">Eastern green mamba</name>
    <name type="synonym">Naja angusticeps</name>
    <dbReference type="NCBI Taxonomy" id="8618"/>
    <lineage>
        <taxon>Eukaryota</taxon>
        <taxon>Metazoa</taxon>
        <taxon>Chordata</taxon>
        <taxon>Craniata</taxon>
        <taxon>Vertebrata</taxon>
        <taxon>Euteleostomi</taxon>
        <taxon>Lepidosauria</taxon>
        <taxon>Squamata</taxon>
        <taxon>Bifurcata</taxon>
        <taxon>Unidentata</taxon>
        <taxon>Episquamata</taxon>
        <taxon>Toxicofera</taxon>
        <taxon>Serpentes</taxon>
        <taxon>Colubroidea</taxon>
        <taxon>Elapidae</taxon>
        <taxon>Elapinae</taxon>
        <taxon>Dendroaspis</taxon>
    </lineage>
</organism>
<comment type="function">
    <text evidence="2 3 4">Selectively interacts with vasopressin V2 receptor (V2R/AVPR2) and fully inhibits three major signaling pathways of this receptor that are GalphaS protein, the interaction with beta-arrestin and activation of MAP kinase (PubMed:28630289, PubMed:35122240). Inhibits vasopressin binding human V2R in the nanomolar range (Ki=5.02 nM), and also potently inhibits vasopressin-induced cAMP production (IC(50)=94 nM) (PubMed:35122240). In vivo, this protein shows an aquaretic effect (PubMed:28630289, PubMed:35122240). Urine output increases and urine osmolality decreases dramatically under treatment with this protein, without differences observed between healthy mice and the pcy mice model of the autosomal-dominant polycystic kidney disease (ADPKD) (PubMed:28630289). This protein does not modify electrolyte, protein and urea excretions in the urine samples, but produces a 3-fold decrease of creatinine levels (PubMed:28630289). Intraperitoneal injection of this protein into the pcy mice significantly reduces the number of renal cysts and the total area of cysts (PubMed:28630289). This protein also shows high efficacy in preventing hyponatremia in rat models (induced by DAVP) (PubMed:33052234). Is highly visible in mice liver and kidney after intravenous injection (PubMed:33052234). Is rapidly eliminated in the liver, whereas it exhibits slow elimination in the kidney due to the high expression of V2R which acts as a reservoir (PubMed:33052234). In addition, its elimination from blood is rapid (PubMed:33052234). Fluorescent MQ1 probes could also be used for imaging V2R-overexpressing cancer cells; note that these probes label the three renal cancer cell lines CAKI-2, ACHN and A498 that highly express V2R (PubMed:33052234). In vivo, does not show any toxicity on animals, even at highest doses tested, such as prostration, spidy coat, appetite or weight loss (PubMed:33052234).</text>
</comment>
<comment type="subcellular location">
    <subcellularLocation>
        <location evidence="2">Secreted</location>
    </subcellularLocation>
</comment>
<comment type="tissue specificity">
    <text evidence="8">Expressed by the venom gland.</text>
</comment>
<comment type="domain">
    <text evidence="4 9">Exploits its two major loops and engages more positions in its interaction with V2R (PubMed:35122240). The pharmacophore defined by numerous amino acids positioned in loop 1 (9 to 18) and loop 2 (34, 39 and 44) may be at the origin of the absolute selectivity of this protein for V2R (Probable).</text>
</comment>
<comment type="mass spectrometry"/>
<comment type="mass spectrometry">
    <text>Monoisotopic mass.</text>
</comment>
<comment type="biotechnology">
    <text evidence="3">Is a new promising drug for aquaresis-related diseases, including hyponatremia, and a molecular probe to visualize in vitro and in vivo V2R expressed physiologically or under pathological conditions.</text>
</comment>
<comment type="biotechnology">
    <text evidence="2">Is a new promising therapeutic agent against polycystic kidney diseases (PKD). It shows renoprotective effect on the murine model for PKD, since the number of renal cysts and the total area of cysts is significantly reduced after treatment with this protein.</text>
</comment>
<comment type="miscellaneous">
    <text evidence="2">Negative results: shows a weak inhibition on trypsin (PRSS1) (IC(50)=14.8 uM) and Kv1.1/KCNA1 (IC(50)=8.2 uM). Does not interact with vasopression V1a, V1b and the oxytocin receptors. Does not show activity on potassium (except Kv1.1), sodium, and calcium (Cav1.2) channels. Does not show agonist and antagonist activities on the 156 GPCR tested. Does not activate pathways of the vasopression V2 receptor.</text>
</comment>
<comment type="similarity">
    <text evidence="7">Belongs to the venom Kunitz-type family.</text>
</comment>
<protein>
    <recommendedName>
        <fullName evidence="5">Mambaquaretin-1</fullName>
        <shortName evidence="5">MQ-1</shortName>
        <shortName evidence="6">MQ1</shortName>
    </recommendedName>
    <alternativeName>
        <fullName evidence="6">Upsilon-Da2a</fullName>
    </alternativeName>
</protein>
<name>MAMB1_DENAN</name>
<accession>A0A1Z0YU59</accession>
<accession>C0HK15</accession>
<keyword id="KW-0002">3D-structure</keyword>
<keyword id="KW-0903">Direct protein sequencing</keyword>
<keyword id="KW-1015">Disulfide bond</keyword>
<keyword id="KW-1213">G-protein coupled receptor impairing toxin</keyword>
<keyword id="KW-0964">Secreted</keyword>
<keyword id="KW-0800">Toxin</keyword>